<organism>
    <name type="scientific">Homo sapiens</name>
    <name type="common">Human</name>
    <dbReference type="NCBI Taxonomy" id="9606"/>
    <lineage>
        <taxon>Eukaryota</taxon>
        <taxon>Metazoa</taxon>
        <taxon>Chordata</taxon>
        <taxon>Craniata</taxon>
        <taxon>Vertebrata</taxon>
        <taxon>Euteleostomi</taxon>
        <taxon>Mammalia</taxon>
        <taxon>Eutheria</taxon>
        <taxon>Euarchontoglires</taxon>
        <taxon>Primates</taxon>
        <taxon>Haplorrhini</taxon>
        <taxon>Catarrhini</taxon>
        <taxon>Hominidae</taxon>
        <taxon>Homo</taxon>
    </lineage>
</organism>
<keyword id="KW-0011">Acute phase</keyword>
<keyword id="KW-0903">Direct protein sequencing</keyword>
<keyword id="KW-0325">Glycoprotein</keyword>
<keyword id="KW-0345">HDL</keyword>
<keyword id="KW-1267">Proteomics identification</keyword>
<keyword id="KW-1185">Reference proteome</keyword>
<keyword id="KW-0964">Secreted</keyword>
<keyword id="KW-0732">Signal</keyword>
<name>SAA4_HUMAN</name>
<comment type="function">
    <text evidence="1">Major acute phase reactant.</text>
</comment>
<comment type="subunit">
    <text evidence="2">Apolipoprotein of the HDL complex.</text>
</comment>
<comment type="interaction">
    <interactant intactId="EBI-750242">
        <id>P35542</id>
    </interactant>
    <interactant intactId="EBI-7062247">
        <id>Q9UHD4</id>
        <label>CIDEB</label>
    </interactant>
    <organismsDiffer>false</organismsDiffer>
    <experiments>3</experiments>
</comment>
<comment type="subcellular location">
    <subcellularLocation>
        <location evidence="2">Secreted</location>
    </subcellularLocation>
</comment>
<comment type="tissue specificity">
    <text>Expressed by the liver; secreted in plasma.</text>
</comment>
<comment type="induction">
    <text>Constitutively expressed.</text>
</comment>
<comment type="similarity">
    <text evidence="14">Belongs to the SAA family.</text>
</comment>
<evidence type="ECO:0000250" key="1">
    <source>
        <dbReference type="UniProtKB" id="P05366"/>
    </source>
</evidence>
<evidence type="ECO:0000250" key="2">
    <source>
        <dbReference type="UniProtKB" id="P0DJI8"/>
    </source>
</evidence>
<evidence type="ECO:0000256" key="3">
    <source>
        <dbReference type="SAM" id="MobiDB-lite"/>
    </source>
</evidence>
<evidence type="ECO:0000269" key="4">
    <source>
    </source>
</evidence>
<evidence type="ECO:0000269" key="5">
    <source>
    </source>
</evidence>
<evidence type="ECO:0000269" key="6">
    <source>
    </source>
</evidence>
<evidence type="ECO:0000269" key="7">
    <source>
    </source>
</evidence>
<evidence type="ECO:0000269" key="8">
    <source>
    </source>
</evidence>
<evidence type="ECO:0000269" key="9">
    <source>
    </source>
</evidence>
<evidence type="ECO:0000269" key="10">
    <source>
    </source>
</evidence>
<evidence type="ECO:0000269" key="11">
    <source ref="4"/>
</evidence>
<evidence type="ECO:0000269" key="12">
    <source ref="6"/>
</evidence>
<evidence type="ECO:0000303" key="13">
    <source>
    </source>
</evidence>
<evidence type="ECO:0000305" key="14"/>
<evidence type="ECO:0000312" key="15">
    <source>
        <dbReference type="HGNC" id="HGNC:10516"/>
    </source>
</evidence>
<feature type="signal peptide">
    <location>
        <begin position="1"/>
        <end position="18"/>
    </location>
</feature>
<feature type="chain" id="PRO_0000031583" description="Serum amyloid A-4 protein">
    <location>
        <begin position="19"/>
        <end position="130"/>
    </location>
</feature>
<feature type="region of interest" description="Disordered" evidence="3">
    <location>
        <begin position="101"/>
        <end position="130"/>
    </location>
</feature>
<feature type="glycosylation site" description="N-linked (GlcNAc...) asparagine; partial" evidence="6 7 8">
    <location>
        <position position="94"/>
    </location>
</feature>
<feature type="sequence variant" id="VAR_051893" description="Confirmed at protein level; dbSNP:rs2460827." evidence="4 5 7 9 10 11 12">
    <original>C</original>
    <variation>Y</variation>
    <location>
        <position position="89"/>
    </location>
</feature>
<sequence length="130" mass="14747">MRLFTGIVFCSLVMGVTSESWRSFFKEALQGVGDMGRAYWDIMISNHQNSNRYLYARGNYDAAQRGPGGVWAAKLISRSRVYLQGLIDCYLFGNSSTVLEDSKSNEKAEEWGRSGKDPDRFRPDGLPKKY</sequence>
<gene>
    <name evidence="13 15" type="primary">SAA4</name>
    <name type="synonym">CSAA</name>
</gene>
<protein>
    <recommendedName>
        <fullName evidence="14">Serum amyloid A-4 protein</fullName>
    </recommendedName>
    <alternativeName>
        <fullName>Constitutively expressed serum amyloid A protein</fullName>
        <shortName>C-SAA</shortName>
    </alternativeName>
</protein>
<reference key="1">
    <citation type="journal article" date="1992" name="J. Biol. Chem.">
        <title>Identification of novel members of the serum amyloid A protein superfamily as constitutive apolipoproteins of high density lipoprotein.</title>
        <authorList>
            <person name="Whitehead A.S."/>
            <person name="Debeer M.C."/>
            <person name="Steel D.M."/>
            <person name="Rits M."/>
            <person name="Lelias J.M."/>
            <person name="Lane W.S."/>
            <person name="Debeer F.C."/>
        </authorList>
    </citation>
    <scope>NUCLEOTIDE SEQUENCE [GENOMIC DNA]</scope>
    <scope>VARIANT TYR-89</scope>
    <source>
        <tissue>Liver</tissue>
    </source>
</reference>
<reference key="2">
    <citation type="journal article" date="1993" name="Genomics">
        <title>A constitutively expressed serum amyloid A protein gene (SAA4) is closely linked to, and shares structural similarities with, an acute-phase serum amyloid A protein gene (SAA2).</title>
        <authorList>
            <person name="Steel D.M."/>
            <person name="Sellar G.C."/>
            <person name="Uhlar C.M."/>
            <person name="Simon S."/>
            <person name="Debeer F.C."/>
            <person name="Whitehead A.S."/>
        </authorList>
    </citation>
    <scope>NUCLEOTIDE SEQUENCE [GENOMIC DNA]</scope>
    <scope>VARIANT TYR-89</scope>
</reference>
<reference key="3">
    <citation type="journal article" date="1992" name="Scand. J. Immunol.">
        <title>Analysis of the genomic and derived protein structure of a novel human serum amyloid A gene, SAA4.</title>
        <authorList>
            <person name="Watson G."/>
            <person name="Coade S."/>
            <person name="Woo P."/>
        </authorList>
    </citation>
    <scope>NUCLEOTIDE SEQUENCE [GENOMIC DNA]</scope>
    <scope>VARIANT TYR-89</scope>
</reference>
<reference key="4">
    <citation type="submission" date="2004-06" db="EMBL/GenBank/DDBJ databases">
        <title>Cloning of human full open reading frames in Gateway(TM) system entry vector (pDONR201).</title>
        <authorList>
            <person name="Ebert L."/>
            <person name="Schick M."/>
            <person name="Neubert P."/>
            <person name="Schatten R."/>
            <person name="Henze S."/>
            <person name="Korn B."/>
        </authorList>
    </citation>
    <scope>NUCLEOTIDE SEQUENCE [LARGE SCALE MRNA]</scope>
    <scope>VARIANT TYR-89</scope>
</reference>
<reference key="5">
    <citation type="journal article" date="2006" name="Nature">
        <title>Human chromosome 11 DNA sequence and analysis including novel gene identification.</title>
        <authorList>
            <person name="Taylor T.D."/>
            <person name="Noguchi H."/>
            <person name="Totoki Y."/>
            <person name="Toyoda A."/>
            <person name="Kuroki Y."/>
            <person name="Dewar K."/>
            <person name="Lloyd C."/>
            <person name="Itoh T."/>
            <person name="Takeda T."/>
            <person name="Kim D.-W."/>
            <person name="She X."/>
            <person name="Barlow K.F."/>
            <person name="Bloom T."/>
            <person name="Bruford E."/>
            <person name="Chang J.L."/>
            <person name="Cuomo C.A."/>
            <person name="Eichler E."/>
            <person name="FitzGerald M.G."/>
            <person name="Jaffe D.B."/>
            <person name="LaButti K."/>
            <person name="Nicol R."/>
            <person name="Park H.-S."/>
            <person name="Seaman C."/>
            <person name="Sougnez C."/>
            <person name="Yang X."/>
            <person name="Zimmer A.R."/>
            <person name="Zody M.C."/>
            <person name="Birren B.W."/>
            <person name="Nusbaum C."/>
            <person name="Fujiyama A."/>
            <person name="Hattori M."/>
            <person name="Rogers J."/>
            <person name="Lander E.S."/>
            <person name="Sakaki Y."/>
        </authorList>
    </citation>
    <scope>NUCLEOTIDE SEQUENCE [LARGE SCALE GENOMIC DNA]</scope>
</reference>
<reference key="6">
    <citation type="submission" date="2005-09" db="EMBL/GenBank/DDBJ databases">
        <authorList>
            <person name="Mural R.J."/>
            <person name="Istrail S."/>
            <person name="Sutton G.G."/>
            <person name="Florea L."/>
            <person name="Halpern A.L."/>
            <person name="Mobarry C.M."/>
            <person name="Lippert R."/>
            <person name="Walenz B."/>
            <person name="Shatkay H."/>
            <person name="Dew I."/>
            <person name="Miller J.R."/>
            <person name="Flanigan M.J."/>
            <person name="Edwards N.J."/>
            <person name="Bolanos R."/>
            <person name="Fasulo D."/>
            <person name="Halldorsson B.V."/>
            <person name="Hannenhalli S."/>
            <person name="Turner R."/>
            <person name="Yooseph S."/>
            <person name="Lu F."/>
            <person name="Nusskern D.R."/>
            <person name="Shue B.C."/>
            <person name="Zheng X.H."/>
            <person name="Zhong F."/>
            <person name="Delcher A.L."/>
            <person name="Huson D.H."/>
            <person name="Kravitz S.A."/>
            <person name="Mouchard L."/>
            <person name="Reinert K."/>
            <person name="Remington K.A."/>
            <person name="Clark A.G."/>
            <person name="Waterman M.S."/>
            <person name="Eichler E.E."/>
            <person name="Adams M.D."/>
            <person name="Hunkapiller M.W."/>
            <person name="Myers E.W."/>
            <person name="Venter J.C."/>
        </authorList>
    </citation>
    <scope>NUCLEOTIDE SEQUENCE [LARGE SCALE GENOMIC DNA]</scope>
    <scope>VARIANT TYR-89</scope>
</reference>
<reference key="7">
    <citation type="journal article" date="2004" name="Genome Res.">
        <title>The status, quality, and expansion of the NIH full-length cDNA project: the Mammalian Gene Collection (MGC).</title>
        <authorList>
            <consortium name="The MGC Project Team"/>
        </authorList>
    </citation>
    <scope>NUCLEOTIDE SEQUENCE [LARGE SCALE MRNA]</scope>
    <scope>VARIANT TYR-89</scope>
    <source>
        <tissue>Liver</tissue>
    </source>
</reference>
<reference key="8">
    <citation type="journal article" date="1996" name="Electrophoresis">
        <title>Characterization of human serum amyloid A protein isoforms separated by two-dimensional electrophoresis by liquid chromatography/electrospray ionization tandem mass spectrometry.</title>
        <authorList>
            <person name="Ducret A."/>
            <person name="Bruun C.F."/>
            <person name="Bures E.J."/>
            <person name="Marhaug G."/>
            <person name="Husby G."/>
            <person name="Aebersold R."/>
        </authorList>
    </citation>
    <scope>PARTIAL PROTEIN SEQUENCE</scope>
</reference>
<reference key="9">
    <citation type="journal article" date="2005" name="J. Proteome Res.">
        <title>Human plasma N-glycoproteome analysis by immunoaffinity subtraction, hydrazide chemistry, and mass spectrometry.</title>
        <authorList>
            <person name="Liu T."/>
            <person name="Qian W.-J."/>
            <person name="Gritsenko M.A."/>
            <person name="Camp D.G. II"/>
            <person name="Monroe M.E."/>
            <person name="Moore R.J."/>
            <person name="Smith R.D."/>
        </authorList>
    </citation>
    <scope>GLYCOSYLATION [LARGE SCALE ANALYSIS] AT ASN-94</scope>
    <source>
        <tissue>Plasma</tissue>
    </source>
</reference>
<reference key="10">
    <citation type="journal article" date="2009" name="J. Proteome Res.">
        <title>Glycoproteomics analysis of human liver tissue by combination of multiple enzyme digestion and hydrazide chemistry.</title>
        <authorList>
            <person name="Chen R."/>
            <person name="Jiang X."/>
            <person name="Sun D."/>
            <person name="Han G."/>
            <person name="Wang F."/>
            <person name="Ye M."/>
            <person name="Wang L."/>
            <person name="Zou H."/>
        </authorList>
    </citation>
    <scope>GLYCOSYLATION [LARGE SCALE ANALYSIS] AT ASN-94</scope>
    <source>
        <tissue>Liver</tissue>
    </source>
</reference>
<reference key="11">
    <citation type="journal article" date="2011" name="J. Mol. Cell Biol.">
        <title>Quantitative detection of single amino acid polymorphisms by targeted proteomics.</title>
        <authorList>
            <person name="Su Z.D."/>
            <person name="Sun L."/>
            <person name="Yu D.X."/>
            <person name="Li R.X."/>
            <person name="Li H.X."/>
            <person name="Yu Z.J."/>
            <person name="Sheng Q.H."/>
            <person name="Lin X."/>
            <person name="Zeng R."/>
            <person name="Wu J.R."/>
        </authorList>
    </citation>
    <scope>VARIANT TYR-89</scope>
    <scope>IDENTIFICATION BY MASS SPECTROMETRY</scope>
</reference>
<dbReference type="EMBL" id="L05920">
    <property type="status" value="NOT_ANNOTATED_CDS"/>
    <property type="molecule type" value="Genomic_DNA"/>
</dbReference>
<dbReference type="EMBL" id="M81349">
    <property type="protein sequence ID" value="AAA60298.1"/>
    <property type="molecule type" value="mRNA"/>
</dbReference>
<dbReference type="EMBL" id="S48983">
    <property type="protein sequence ID" value="AAB24060.1"/>
    <property type="molecule type" value="Genomic_DNA"/>
</dbReference>
<dbReference type="EMBL" id="S48980">
    <property type="protein sequence ID" value="AAB24060.1"/>
    <property type="status" value="JOINED"/>
    <property type="molecule type" value="Genomic_DNA"/>
</dbReference>
<dbReference type="EMBL" id="S48981">
    <property type="protein sequence ID" value="AAB24060.1"/>
    <property type="status" value="JOINED"/>
    <property type="molecule type" value="Genomic_DNA"/>
</dbReference>
<dbReference type="EMBL" id="CR541758">
    <property type="protein sequence ID" value="CAG46558.1"/>
    <property type="molecule type" value="mRNA"/>
</dbReference>
<dbReference type="EMBL" id="AC090099">
    <property type="status" value="NOT_ANNOTATED_CDS"/>
    <property type="molecule type" value="Genomic_DNA"/>
</dbReference>
<dbReference type="EMBL" id="CH471064">
    <property type="protein sequence ID" value="EAW68415.1"/>
    <property type="molecule type" value="Genomic_DNA"/>
</dbReference>
<dbReference type="EMBL" id="BC007026">
    <property type="protein sequence ID" value="AAH07026.1"/>
    <property type="molecule type" value="mRNA"/>
</dbReference>
<dbReference type="CCDS" id="CCDS7832.1"/>
<dbReference type="PIR" id="A38974">
    <property type="entry name" value="A38974"/>
</dbReference>
<dbReference type="RefSeq" id="NP_006503.2">
    <property type="nucleotide sequence ID" value="NM_006512.4"/>
</dbReference>
<dbReference type="SMR" id="P35542"/>
<dbReference type="BioGRID" id="112199">
    <property type="interactions" value="11"/>
</dbReference>
<dbReference type="FunCoup" id="P35542">
    <property type="interactions" value="45"/>
</dbReference>
<dbReference type="IntAct" id="P35542">
    <property type="interactions" value="4"/>
</dbReference>
<dbReference type="STRING" id="9606.ENSP00000278222"/>
<dbReference type="GlyConnect" id="1739">
    <property type="glycosylation" value="2 N-Linked glycans (1 site)"/>
</dbReference>
<dbReference type="GlyCosmos" id="P35542">
    <property type="glycosylation" value="1 site, 3 glycans"/>
</dbReference>
<dbReference type="GlyGen" id="P35542">
    <property type="glycosylation" value="1 site, 3 N-linked glycans (1 site)"/>
</dbReference>
<dbReference type="iPTMnet" id="P35542"/>
<dbReference type="PhosphoSitePlus" id="P35542"/>
<dbReference type="BioMuta" id="SAA4"/>
<dbReference type="DMDM" id="296452894"/>
<dbReference type="jPOST" id="P35542"/>
<dbReference type="MassIVE" id="P35542"/>
<dbReference type="PaxDb" id="9606-ENSP00000278222"/>
<dbReference type="PeptideAtlas" id="P35542"/>
<dbReference type="ProteomicsDB" id="55078"/>
<dbReference type="TopDownProteomics" id="P35542"/>
<dbReference type="Antibodypedia" id="12214">
    <property type="antibodies" value="287 antibodies from 35 providers"/>
</dbReference>
<dbReference type="DNASU" id="6291"/>
<dbReference type="Ensembl" id="ENST00000278222.7">
    <property type="protein sequence ID" value="ENSP00000278222.4"/>
    <property type="gene ID" value="ENSG00000148965.10"/>
</dbReference>
<dbReference type="GeneID" id="6291"/>
<dbReference type="KEGG" id="hsa:6291"/>
<dbReference type="MANE-Select" id="ENST00000278222.7">
    <property type="protein sequence ID" value="ENSP00000278222.4"/>
    <property type="RefSeq nucleotide sequence ID" value="NM_006512.4"/>
    <property type="RefSeq protein sequence ID" value="NP_006503.2"/>
</dbReference>
<dbReference type="UCSC" id="uc001mny.4">
    <property type="organism name" value="human"/>
</dbReference>
<dbReference type="AGR" id="HGNC:10516"/>
<dbReference type="CTD" id="6291"/>
<dbReference type="DisGeNET" id="6291"/>
<dbReference type="GeneCards" id="SAA4"/>
<dbReference type="HGNC" id="HGNC:10516">
    <property type="gene designation" value="SAA4"/>
</dbReference>
<dbReference type="HPA" id="ENSG00000148965">
    <property type="expression patterns" value="Tissue enriched (liver)"/>
</dbReference>
<dbReference type="MIM" id="104752">
    <property type="type" value="gene"/>
</dbReference>
<dbReference type="neXtProt" id="NX_P35542"/>
<dbReference type="OpenTargets" id="ENSG00000148965"/>
<dbReference type="PharmGKB" id="PA34924"/>
<dbReference type="VEuPathDB" id="HostDB:ENSG00000148965"/>
<dbReference type="eggNOG" id="ENOG502S4PB">
    <property type="taxonomic scope" value="Eukaryota"/>
</dbReference>
<dbReference type="GeneTree" id="ENSGT00390000004737"/>
<dbReference type="InParanoid" id="P35542"/>
<dbReference type="OrthoDB" id="6112826at2759"/>
<dbReference type="PAN-GO" id="P35542">
    <property type="GO annotations" value="0 GO annotations based on evolutionary models"/>
</dbReference>
<dbReference type="PhylomeDB" id="P35542"/>
<dbReference type="TreeFam" id="TF332544"/>
<dbReference type="PathwayCommons" id="P35542"/>
<dbReference type="SignaLink" id="P35542"/>
<dbReference type="BioGRID-ORCS" id="6291">
    <property type="hits" value="9 hits in 1138 CRISPR screens"/>
</dbReference>
<dbReference type="GenomeRNAi" id="6291"/>
<dbReference type="Pharos" id="P35542">
    <property type="development level" value="Tbio"/>
</dbReference>
<dbReference type="PRO" id="PR:P35542"/>
<dbReference type="Proteomes" id="UP000005640">
    <property type="component" value="Chromosome 11"/>
</dbReference>
<dbReference type="RNAct" id="P35542">
    <property type="molecule type" value="protein"/>
</dbReference>
<dbReference type="Bgee" id="ENSG00000148965">
    <property type="expression patterns" value="Expressed in right lobe of liver and 77 other cell types or tissues"/>
</dbReference>
<dbReference type="GO" id="GO:0070062">
    <property type="term" value="C:extracellular exosome"/>
    <property type="evidence" value="ECO:0007005"/>
    <property type="project" value="UniProtKB"/>
</dbReference>
<dbReference type="GO" id="GO:0005576">
    <property type="term" value="C:extracellular region"/>
    <property type="evidence" value="ECO:0000303"/>
    <property type="project" value="UniProtKB"/>
</dbReference>
<dbReference type="GO" id="GO:0034364">
    <property type="term" value="C:high-density lipoprotein particle"/>
    <property type="evidence" value="ECO:0007669"/>
    <property type="project" value="UniProtKB-KW"/>
</dbReference>
<dbReference type="GO" id="GO:0006953">
    <property type="term" value="P:acute-phase response"/>
    <property type="evidence" value="ECO:0007669"/>
    <property type="project" value="UniProtKB-KW"/>
</dbReference>
<dbReference type="FunFam" id="1.10.132.110:FF:000001">
    <property type="entry name" value="Serum amyloid A protein"/>
    <property type="match status" value="1"/>
</dbReference>
<dbReference type="Gene3D" id="1.10.132.110">
    <property type="entry name" value="Serum amyloid A protein"/>
    <property type="match status" value="1"/>
</dbReference>
<dbReference type="InterPro" id="IPR000096">
    <property type="entry name" value="Serum_amyloid_A"/>
</dbReference>
<dbReference type="InterPro" id="IPR052464">
    <property type="entry name" value="Synovial_Prolif_Regulator"/>
</dbReference>
<dbReference type="PANTHER" id="PTHR23424">
    <property type="entry name" value="SERUM AMYLOID A"/>
    <property type="match status" value="1"/>
</dbReference>
<dbReference type="PANTHER" id="PTHR23424:SF29">
    <property type="entry name" value="SERUM AMYLOID A PROTEIN"/>
    <property type="match status" value="1"/>
</dbReference>
<dbReference type="Pfam" id="PF00277">
    <property type="entry name" value="SAA"/>
    <property type="match status" value="1"/>
</dbReference>
<dbReference type="PIRSF" id="PIRSF002472">
    <property type="entry name" value="Serum_amyloid_A"/>
    <property type="match status" value="1"/>
</dbReference>
<dbReference type="PRINTS" id="PR00306">
    <property type="entry name" value="SERUMAMYLOID"/>
</dbReference>
<dbReference type="SMART" id="SM00197">
    <property type="entry name" value="SAA"/>
    <property type="match status" value="1"/>
</dbReference>
<dbReference type="PROSITE" id="PS00992">
    <property type="entry name" value="SAA"/>
    <property type="match status" value="1"/>
</dbReference>
<proteinExistence type="evidence at protein level"/>
<accession>P35542</accession>
<accession>Q6FHJ4</accession>